<sequence length="303" mass="32715">MASRQPEVPALAPSGPLGKMSLPIGMCRRAFSYDDALEDPAPMTPPPSDMGSIPWKPVIPERKYQHLDKTEEGAASVSSLAVTPSPATDSSDKAPVVKAKATHVIMSSLITKQTQESIQRFEQQAGLRDAGYTPHKGLTTEETKYLRVAEALHKLKLQSGETAKEEKHPASAQSTPSSTPHASPKQKSRGWFPSGSSTALPAPNPHTMDPGSGNDRNSADKWSLFGPRPLQKSDSGFAIQAYKGAPRPSPMEVMRAQATRVGEDPATFKPPKMDVPMVEGKKQPLRTHNLKPRDLNVLTPTGF</sequence>
<organism>
    <name type="scientific">Mus musculus</name>
    <name type="common">Mouse</name>
    <dbReference type="NCBI Taxonomy" id="10090"/>
    <lineage>
        <taxon>Eukaryota</taxon>
        <taxon>Metazoa</taxon>
        <taxon>Chordata</taxon>
        <taxon>Craniata</taxon>
        <taxon>Vertebrata</taxon>
        <taxon>Euteleostomi</taxon>
        <taxon>Mammalia</taxon>
        <taxon>Eutheria</taxon>
        <taxon>Euarchontoglires</taxon>
        <taxon>Glires</taxon>
        <taxon>Rodentia</taxon>
        <taxon>Myomorpha</taxon>
        <taxon>Muroidea</taxon>
        <taxon>Muridae</taxon>
        <taxon>Murinae</taxon>
        <taxon>Mus</taxon>
        <taxon>Mus</taxon>
    </lineage>
</organism>
<protein>
    <recommendedName>
        <fullName>Putative monooxygenase p33MONOX</fullName>
        <ecNumber>1.-.-.-</ecNumber>
    </recommendedName>
</protein>
<proteinExistence type="evidence at protein level"/>
<name>P33MX_MOUSE</name>
<reference key="1">
    <citation type="journal article" date="2004" name="DNA Res.">
        <title>Prediction of the coding sequences of mouse homologues of KIAA gene: IV. The complete nucleotide sequences of 500 mouse KIAA-homologous cDNAs identified by screening of terminal sequences of cDNA clones randomly sampled from size-fractionated libraries.</title>
        <authorList>
            <person name="Okazaki N."/>
            <person name="Kikuno R."/>
            <person name="Ohara R."/>
            <person name="Inamoto S."/>
            <person name="Koseki H."/>
            <person name="Hiraoka S."/>
            <person name="Saga Y."/>
            <person name="Seino S."/>
            <person name="Nishimura M."/>
            <person name="Kaisho T."/>
            <person name="Hoshino K."/>
            <person name="Kitamura H."/>
            <person name="Nagase T."/>
            <person name="Ohara O."/>
            <person name="Koga H."/>
        </authorList>
    </citation>
    <scope>NUCLEOTIDE SEQUENCE [LARGE SCALE MRNA] (ISOFORM 1)</scope>
</reference>
<reference key="2">
    <citation type="journal article" date="2005" name="Science">
        <title>The transcriptional landscape of the mammalian genome.</title>
        <authorList>
            <person name="Carninci P."/>
            <person name="Kasukawa T."/>
            <person name="Katayama S."/>
            <person name="Gough J."/>
            <person name="Frith M.C."/>
            <person name="Maeda N."/>
            <person name="Oyama R."/>
            <person name="Ravasi T."/>
            <person name="Lenhard B."/>
            <person name="Wells C."/>
            <person name="Kodzius R."/>
            <person name="Shimokawa K."/>
            <person name="Bajic V.B."/>
            <person name="Brenner S.E."/>
            <person name="Batalov S."/>
            <person name="Forrest A.R."/>
            <person name="Zavolan M."/>
            <person name="Davis M.J."/>
            <person name="Wilming L.G."/>
            <person name="Aidinis V."/>
            <person name="Allen J.E."/>
            <person name="Ambesi-Impiombato A."/>
            <person name="Apweiler R."/>
            <person name="Aturaliya R.N."/>
            <person name="Bailey T.L."/>
            <person name="Bansal M."/>
            <person name="Baxter L."/>
            <person name="Beisel K.W."/>
            <person name="Bersano T."/>
            <person name="Bono H."/>
            <person name="Chalk A.M."/>
            <person name="Chiu K.P."/>
            <person name="Choudhary V."/>
            <person name="Christoffels A."/>
            <person name="Clutterbuck D.R."/>
            <person name="Crowe M.L."/>
            <person name="Dalla E."/>
            <person name="Dalrymple B.P."/>
            <person name="de Bono B."/>
            <person name="Della Gatta G."/>
            <person name="di Bernardo D."/>
            <person name="Down T."/>
            <person name="Engstrom P."/>
            <person name="Fagiolini M."/>
            <person name="Faulkner G."/>
            <person name="Fletcher C.F."/>
            <person name="Fukushima T."/>
            <person name="Furuno M."/>
            <person name="Futaki S."/>
            <person name="Gariboldi M."/>
            <person name="Georgii-Hemming P."/>
            <person name="Gingeras T.R."/>
            <person name="Gojobori T."/>
            <person name="Green R.E."/>
            <person name="Gustincich S."/>
            <person name="Harbers M."/>
            <person name="Hayashi Y."/>
            <person name="Hensch T.K."/>
            <person name="Hirokawa N."/>
            <person name="Hill D."/>
            <person name="Huminiecki L."/>
            <person name="Iacono M."/>
            <person name="Ikeo K."/>
            <person name="Iwama A."/>
            <person name="Ishikawa T."/>
            <person name="Jakt M."/>
            <person name="Kanapin A."/>
            <person name="Katoh M."/>
            <person name="Kawasawa Y."/>
            <person name="Kelso J."/>
            <person name="Kitamura H."/>
            <person name="Kitano H."/>
            <person name="Kollias G."/>
            <person name="Krishnan S.P."/>
            <person name="Kruger A."/>
            <person name="Kummerfeld S.K."/>
            <person name="Kurochkin I.V."/>
            <person name="Lareau L.F."/>
            <person name="Lazarevic D."/>
            <person name="Lipovich L."/>
            <person name="Liu J."/>
            <person name="Liuni S."/>
            <person name="McWilliam S."/>
            <person name="Madan Babu M."/>
            <person name="Madera M."/>
            <person name="Marchionni L."/>
            <person name="Matsuda H."/>
            <person name="Matsuzawa S."/>
            <person name="Miki H."/>
            <person name="Mignone F."/>
            <person name="Miyake S."/>
            <person name="Morris K."/>
            <person name="Mottagui-Tabar S."/>
            <person name="Mulder N."/>
            <person name="Nakano N."/>
            <person name="Nakauchi H."/>
            <person name="Ng P."/>
            <person name="Nilsson R."/>
            <person name="Nishiguchi S."/>
            <person name="Nishikawa S."/>
            <person name="Nori F."/>
            <person name="Ohara O."/>
            <person name="Okazaki Y."/>
            <person name="Orlando V."/>
            <person name="Pang K.C."/>
            <person name="Pavan W.J."/>
            <person name="Pavesi G."/>
            <person name="Pesole G."/>
            <person name="Petrovsky N."/>
            <person name="Piazza S."/>
            <person name="Reed J."/>
            <person name="Reid J.F."/>
            <person name="Ring B.Z."/>
            <person name="Ringwald M."/>
            <person name="Rost B."/>
            <person name="Ruan Y."/>
            <person name="Salzberg S.L."/>
            <person name="Sandelin A."/>
            <person name="Schneider C."/>
            <person name="Schoenbach C."/>
            <person name="Sekiguchi K."/>
            <person name="Semple C.A."/>
            <person name="Seno S."/>
            <person name="Sessa L."/>
            <person name="Sheng Y."/>
            <person name="Shibata Y."/>
            <person name="Shimada H."/>
            <person name="Shimada K."/>
            <person name="Silva D."/>
            <person name="Sinclair B."/>
            <person name="Sperling S."/>
            <person name="Stupka E."/>
            <person name="Sugiura K."/>
            <person name="Sultana R."/>
            <person name="Takenaka Y."/>
            <person name="Taki K."/>
            <person name="Tammoja K."/>
            <person name="Tan S.L."/>
            <person name="Tang S."/>
            <person name="Taylor M.S."/>
            <person name="Tegner J."/>
            <person name="Teichmann S.A."/>
            <person name="Ueda H.R."/>
            <person name="van Nimwegen E."/>
            <person name="Verardo R."/>
            <person name="Wei C.L."/>
            <person name="Yagi K."/>
            <person name="Yamanishi H."/>
            <person name="Zabarovsky E."/>
            <person name="Zhu S."/>
            <person name="Zimmer A."/>
            <person name="Hide W."/>
            <person name="Bult C."/>
            <person name="Grimmond S.M."/>
            <person name="Teasdale R.D."/>
            <person name="Liu E.T."/>
            <person name="Brusic V."/>
            <person name="Quackenbush J."/>
            <person name="Wahlestedt C."/>
            <person name="Mattick J.S."/>
            <person name="Hume D.A."/>
            <person name="Kai C."/>
            <person name="Sasaki D."/>
            <person name="Tomaru Y."/>
            <person name="Fukuda S."/>
            <person name="Kanamori-Katayama M."/>
            <person name="Suzuki M."/>
            <person name="Aoki J."/>
            <person name="Arakawa T."/>
            <person name="Iida J."/>
            <person name="Imamura K."/>
            <person name="Itoh M."/>
            <person name="Kato T."/>
            <person name="Kawaji H."/>
            <person name="Kawagashira N."/>
            <person name="Kawashima T."/>
            <person name="Kojima M."/>
            <person name="Kondo S."/>
            <person name="Konno H."/>
            <person name="Nakano K."/>
            <person name="Ninomiya N."/>
            <person name="Nishio T."/>
            <person name="Okada M."/>
            <person name="Plessy C."/>
            <person name="Shibata K."/>
            <person name="Shiraki T."/>
            <person name="Suzuki S."/>
            <person name="Tagami M."/>
            <person name="Waki K."/>
            <person name="Watahiki A."/>
            <person name="Okamura-Oho Y."/>
            <person name="Suzuki H."/>
            <person name="Kawai J."/>
            <person name="Hayashizaki Y."/>
        </authorList>
    </citation>
    <scope>NUCLEOTIDE SEQUENCE [LARGE SCALE MRNA] (ISOFORMS 1; 2 AND 3)</scope>
    <source>
        <strain>C57BL/6J</strain>
        <tissue>Amnion</tissue>
        <tissue>Head</tissue>
        <tissue>Liver</tissue>
        <tissue>Mammary gland</tissue>
        <tissue>Placenta</tissue>
        <tissue>Skin</tissue>
        <tissue>Testis</tissue>
    </source>
</reference>
<reference key="3">
    <citation type="journal article" date="2004" name="Genome Res.">
        <title>The status, quality, and expansion of the NIH full-length cDNA project: the Mammalian Gene Collection (MGC).</title>
        <authorList>
            <consortium name="The MGC Project Team"/>
        </authorList>
    </citation>
    <scope>NUCLEOTIDE SEQUENCE [LARGE SCALE MRNA] (ISOFORM 1)</scope>
    <source>
        <strain>C57BL/6J</strain>
        <strain>FVB/N</strain>
        <tissue>Brain</tissue>
        <tissue>Kidney</tissue>
        <tissue>Mammary tumor</tissue>
    </source>
</reference>
<reference key="4">
    <citation type="journal article" date="2007" name="Proc. Natl. Acad. Sci. U.S.A.">
        <title>Large-scale phosphorylation analysis of mouse liver.</title>
        <authorList>
            <person name="Villen J."/>
            <person name="Beausoleil S.A."/>
            <person name="Gerber S.A."/>
            <person name="Gygi S.P."/>
        </authorList>
    </citation>
    <scope>IDENTIFICATION BY MASS SPECTROMETRY [LARGE SCALE ANALYSIS]</scope>
    <source>
        <tissue>Liver</tissue>
    </source>
</reference>
<reference key="5">
    <citation type="journal article" date="2009" name="Immunity">
        <title>The phagosomal proteome in interferon-gamma-activated macrophages.</title>
        <authorList>
            <person name="Trost M."/>
            <person name="English L."/>
            <person name="Lemieux S."/>
            <person name="Courcelles M."/>
            <person name="Desjardins M."/>
            <person name="Thibault P."/>
        </authorList>
    </citation>
    <scope>IDENTIFICATION BY MASS SPECTROMETRY [LARGE SCALE ANALYSIS]</scope>
</reference>
<reference key="6">
    <citation type="journal article" date="2010" name="Cell">
        <title>A tissue-specific atlas of mouse protein phosphorylation and expression.</title>
        <authorList>
            <person name="Huttlin E.L."/>
            <person name="Jedrychowski M.P."/>
            <person name="Elias J.E."/>
            <person name="Goswami T."/>
            <person name="Rad R."/>
            <person name="Beausoleil S.A."/>
            <person name="Villen J."/>
            <person name="Haas W."/>
            <person name="Sowa M.E."/>
            <person name="Gygi S.P."/>
        </authorList>
    </citation>
    <scope>PHOSPHORYLATION [LARGE SCALE ANALYSIS] AT THR-44; THR-175 AND SER-183</scope>
    <scope>IDENTIFICATION BY MASS SPECTROMETRY [LARGE SCALE ANALYSIS]</scope>
    <source>
        <tissue>Brain</tissue>
        <tissue>Heart</tissue>
        <tissue>Kidney</tissue>
        <tissue>Lung</tissue>
        <tissue>Spleen</tissue>
        <tissue>Testis</tissue>
    </source>
</reference>
<reference key="7">
    <citation type="journal article" date="2011" name="Mol. Cell. Biochem.">
        <title>Characterizing the novel protein p33MONOX.</title>
        <authorList>
            <person name="Mishra M."/>
            <person name="Inoue N."/>
            <person name="Heese K."/>
        </authorList>
    </citation>
    <scope>TISSUE SPECIFICITY</scope>
    <scope>SUBCELLULAR LOCATION</scope>
</reference>
<keyword id="KW-0025">Alternative splicing</keyword>
<keyword id="KW-0963">Cytoplasm</keyword>
<keyword id="KW-0521">NADP</keyword>
<keyword id="KW-0560">Oxidoreductase</keyword>
<keyword id="KW-0597">Phosphoprotein</keyword>
<keyword id="KW-1185">Reference proteome</keyword>
<evidence type="ECO:0000250" key="1"/>
<evidence type="ECO:0000250" key="2">
    <source>
        <dbReference type="UniProtKB" id="Q96A73"/>
    </source>
</evidence>
<evidence type="ECO:0000256" key="3">
    <source>
        <dbReference type="SAM" id="MobiDB-lite"/>
    </source>
</evidence>
<evidence type="ECO:0000269" key="4">
    <source>
    </source>
</evidence>
<evidence type="ECO:0000303" key="5">
    <source>
    </source>
</evidence>
<evidence type="ECO:0000305" key="6"/>
<evidence type="ECO:0007744" key="7">
    <source>
    </source>
</evidence>
<gene>
    <name type="primary">P33monox</name>
    <name type="synonym">Kiaa1191</name>
</gene>
<accession>Q9DBN4</accession>
<accession>Q3TJ26</accession>
<accession>Q3UMA7</accession>
<accession>Q69ZP2</accession>
<accession>Q8C1J8</accession>
<accession>Q9D4T9</accession>
<dbReference type="EC" id="1.-.-.-"/>
<dbReference type="EMBL" id="AK173126">
    <property type="protein sequence ID" value="BAD32404.1"/>
    <property type="status" value="ALT_INIT"/>
    <property type="molecule type" value="mRNA"/>
</dbReference>
<dbReference type="EMBL" id="AK004845">
    <property type="protein sequence ID" value="BAB23611.1"/>
    <property type="molecule type" value="mRNA"/>
</dbReference>
<dbReference type="EMBL" id="AK014792">
    <property type="protein sequence ID" value="BAC25449.1"/>
    <property type="status" value="ALT_FRAME"/>
    <property type="molecule type" value="mRNA"/>
</dbReference>
<dbReference type="EMBL" id="AK016176">
    <property type="protein sequence ID" value="BAB30137.1"/>
    <property type="molecule type" value="mRNA"/>
</dbReference>
<dbReference type="EMBL" id="AK028697">
    <property type="protein sequence ID" value="BAC26072.1"/>
    <property type="molecule type" value="mRNA"/>
</dbReference>
<dbReference type="EMBL" id="AK145025">
    <property type="protein sequence ID" value="BAE26191.1"/>
    <property type="molecule type" value="mRNA"/>
</dbReference>
<dbReference type="EMBL" id="AK159945">
    <property type="protein sequence ID" value="BAE35501.1"/>
    <property type="molecule type" value="mRNA"/>
</dbReference>
<dbReference type="EMBL" id="AK167616">
    <property type="protein sequence ID" value="BAE39669.1"/>
    <property type="molecule type" value="mRNA"/>
</dbReference>
<dbReference type="EMBL" id="AK169399">
    <property type="protein sequence ID" value="BAE41145.1"/>
    <property type="molecule type" value="mRNA"/>
</dbReference>
<dbReference type="EMBL" id="BC033445">
    <property type="protein sequence ID" value="AAH33445.1"/>
    <property type="molecule type" value="mRNA"/>
</dbReference>
<dbReference type="EMBL" id="BC039775">
    <property type="protein sequence ID" value="AAH39775.1"/>
    <property type="molecule type" value="mRNA"/>
</dbReference>
<dbReference type="EMBL" id="BC043040">
    <property type="protein sequence ID" value="AAH43040.1"/>
    <property type="molecule type" value="mRNA"/>
</dbReference>
<dbReference type="EMBL" id="BC054417">
    <property type="protein sequence ID" value="AAH54417.1"/>
    <property type="molecule type" value="mRNA"/>
</dbReference>
<dbReference type="CCDS" id="CCDS26529.1">
    <molecule id="Q9DBN4-1"/>
</dbReference>
<dbReference type="RefSeq" id="NP_001239574.1">
    <property type="nucleotide sequence ID" value="NM_001252645.1"/>
</dbReference>
<dbReference type="RefSeq" id="NP_001239575.1">
    <property type="nucleotide sequence ID" value="NM_001252646.1"/>
</dbReference>
<dbReference type="RefSeq" id="NP_001239576.1">
    <property type="nucleotide sequence ID" value="NM_001252647.1"/>
</dbReference>
<dbReference type="RefSeq" id="NP_001239577.1">
    <property type="nucleotide sequence ID" value="NM_001252648.1"/>
</dbReference>
<dbReference type="RefSeq" id="NP_598558.1">
    <molecule id="Q9DBN4-1"/>
    <property type="nucleotide sequence ID" value="NM_133797.4"/>
</dbReference>
<dbReference type="RefSeq" id="XP_006517541.1">
    <molecule id="Q9DBN4-1"/>
    <property type="nucleotide sequence ID" value="XM_006517478.3"/>
</dbReference>
<dbReference type="SMR" id="Q9DBN4"/>
<dbReference type="BioGRID" id="220877">
    <property type="interactions" value="3"/>
</dbReference>
<dbReference type="FunCoup" id="Q9DBN4">
    <property type="interactions" value="817"/>
</dbReference>
<dbReference type="STRING" id="10090.ENSMUSP00000026989"/>
<dbReference type="GlyGen" id="Q9DBN4">
    <property type="glycosylation" value="3 sites"/>
</dbReference>
<dbReference type="iPTMnet" id="Q9DBN4"/>
<dbReference type="PhosphoSitePlus" id="Q9DBN4"/>
<dbReference type="PaxDb" id="10090-ENSMUSP00000026989"/>
<dbReference type="PeptideAtlas" id="Q9DBN4"/>
<dbReference type="ProteomicsDB" id="294090">
    <molecule id="Q9DBN4-1"/>
</dbReference>
<dbReference type="ProteomicsDB" id="294091">
    <molecule id="Q9DBN4-2"/>
</dbReference>
<dbReference type="ProteomicsDB" id="294092">
    <molecule id="Q9DBN4-3"/>
</dbReference>
<dbReference type="Pumba" id="Q9DBN4"/>
<dbReference type="Antibodypedia" id="45989">
    <property type="antibodies" value="89 antibodies from 20 providers"/>
</dbReference>
<dbReference type="DNASU" id="97820"/>
<dbReference type="Ensembl" id="ENSMUST00000026989.15">
    <molecule id="Q9DBN4-1"/>
    <property type="protein sequence ID" value="ENSMUSP00000026989.9"/>
    <property type="gene ID" value="ENSMUSG00000025871.19"/>
</dbReference>
<dbReference type="GeneID" id="97820"/>
<dbReference type="KEGG" id="mmu:97820"/>
<dbReference type="UCSC" id="uc007qof.3">
    <molecule id="Q9DBN4-1"/>
    <property type="organism name" value="mouse"/>
</dbReference>
<dbReference type="AGR" id="MGI:1921162"/>
<dbReference type="MGI" id="MGI:1921162">
    <property type="gene designation" value="4833439L19Rik"/>
</dbReference>
<dbReference type="VEuPathDB" id="HostDB:ENSMUSG00000025871"/>
<dbReference type="eggNOG" id="ENOG502QRB0">
    <property type="taxonomic scope" value="Eukaryota"/>
</dbReference>
<dbReference type="GeneTree" id="ENSGT00390000000537"/>
<dbReference type="InParanoid" id="Q9DBN4"/>
<dbReference type="OMA" id="TIQAYKG"/>
<dbReference type="OrthoDB" id="8935954at2759"/>
<dbReference type="PhylomeDB" id="Q9DBN4"/>
<dbReference type="TreeFam" id="TF332226"/>
<dbReference type="BioGRID-ORCS" id="97820">
    <property type="hits" value="4 hits in 78 CRISPR screens"/>
</dbReference>
<dbReference type="ChiTaRS" id="4833439L19Rik">
    <property type="organism name" value="mouse"/>
</dbReference>
<dbReference type="PRO" id="PR:Q9DBN4"/>
<dbReference type="Proteomes" id="UP000000589">
    <property type="component" value="Chromosome 13"/>
</dbReference>
<dbReference type="RNAct" id="Q9DBN4">
    <property type="molecule type" value="protein"/>
</dbReference>
<dbReference type="Bgee" id="ENSMUSG00000025871">
    <property type="expression patterns" value="Expressed in right kidney and 272 other cell types or tissues"/>
</dbReference>
<dbReference type="ExpressionAtlas" id="Q9DBN4">
    <property type="expression patterns" value="baseline and differential"/>
</dbReference>
<dbReference type="GO" id="GO:0005737">
    <property type="term" value="C:cytoplasm"/>
    <property type="evidence" value="ECO:0000314"/>
    <property type="project" value="UniProtKB"/>
</dbReference>
<dbReference type="GO" id="GO:0016491">
    <property type="term" value="F:oxidoreductase activity"/>
    <property type="evidence" value="ECO:0007669"/>
    <property type="project" value="UniProtKB-KW"/>
</dbReference>
<dbReference type="InterPro" id="IPR026759">
    <property type="entry name" value="P33MONOX"/>
</dbReference>
<dbReference type="PANTHER" id="PTHR28342">
    <property type="entry name" value="MONOOXYGENASE P33MONOX-RELATED"/>
    <property type="match status" value="1"/>
</dbReference>
<dbReference type="PANTHER" id="PTHR28342:SF1">
    <property type="entry name" value="MONOOXYGENASE P33MONOX-RELATED"/>
    <property type="match status" value="1"/>
</dbReference>
<dbReference type="Pfam" id="PF15302">
    <property type="entry name" value="P33MONOX"/>
    <property type="match status" value="1"/>
</dbReference>
<feature type="chain" id="PRO_0000307731" description="Putative monooxygenase p33MONOX">
    <location>
        <begin position="1"/>
        <end position="303"/>
    </location>
</feature>
<feature type="region of interest" description="Disordered" evidence="3">
    <location>
        <begin position="1"/>
        <end position="20"/>
    </location>
</feature>
<feature type="region of interest" description="Disordered" evidence="3">
    <location>
        <begin position="37"/>
        <end position="56"/>
    </location>
</feature>
<feature type="region of interest" description="Disordered" evidence="3">
    <location>
        <begin position="66"/>
        <end position="96"/>
    </location>
</feature>
<feature type="region of interest" description="Disordered" evidence="3">
    <location>
        <begin position="156"/>
        <end position="233"/>
    </location>
</feature>
<feature type="region of interest" description="Disordered" evidence="3">
    <location>
        <begin position="260"/>
        <end position="283"/>
    </location>
</feature>
<feature type="short sequence motif" description="Flavin-containing monooxygenase motif">
    <location>
        <begin position="67"/>
        <end position="77"/>
    </location>
</feature>
<feature type="compositionally biased region" description="Polar residues" evidence="3">
    <location>
        <begin position="76"/>
        <end position="89"/>
    </location>
</feature>
<feature type="compositionally biased region" description="Low complexity" evidence="3">
    <location>
        <begin position="170"/>
        <end position="183"/>
    </location>
</feature>
<feature type="modified residue" description="Phosphothreonine" evidence="7">
    <location>
        <position position="44"/>
    </location>
</feature>
<feature type="modified residue" description="Phosphothreonine" evidence="7">
    <location>
        <position position="175"/>
    </location>
</feature>
<feature type="modified residue" description="Phosphoserine" evidence="7">
    <location>
        <position position="183"/>
    </location>
</feature>
<feature type="splice variant" id="VSP_028802" description="In isoform 2." evidence="5">
    <location>
        <begin position="1"/>
        <end position="70"/>
    </location>
</feature>
<feature type="splice variant" id="VSP_028803" description="In isoform 2." evidence="5">
    <original>EEGAASVSSLAVTPSPATDSSDKAPVVKAKATHVIMSSLITK</original>
    <variation>MGAFVALSRWLCSVQPSSLLGHLEPRSLFSAGSRAAGGGRAE</variation>
    <location>
        <begin position="71"/>
        <end position="112"/>
    </location>
</feature>
<feature type="splice variant" id="VSP_028804" description="In isoform 3." evidence="5">
    <original>LHKLKLQSGETAK</original>
    <variation>PHFPFKTASVIPF</variation>
    <location>
        <begin position="152"/>
        <end position="164"/>
    </location>
</feature>
<feature type="splice variant" id="VSP_028805" description="In isoform 3." evidence="5">
    <location>
        <begin position="165"/>
        <end position="303"/>
    </location>
</feature>
<feature type="sequence conflict" description="In Ref. 2; BAE26191." evidence="6" ref="2">
    <original>P</original>
    <variation>H</variation>
    <location>
        <position position="13"/>
    </location>
</feature>
<feature type="sequence conflict" description="In Ref. 2; BAB30137." evidence="6" ref="2">
    <original>LRDAGYTPHKGLT</original>
    <variation>RRDSCITPQWGLS</variation>
    <location>
        <begin position="127"/>
        <end position="139"/>
    </location>
</feature>
<feature type="sequence conflict" description="In Ref. 2; BAE39669." evidence="6" ref="2">
    <original>T</original>
    <variation>A</variation>
    <location>
        <position position="143"/>
    </location>
</feature>
<feature type="sequence conflict" description="In Ref. 2; BAB30137." evidence="6" ref="2">
    <original>Y</original>
    <variation>L</variation>
    <location>
        <position position="145"/>
    </location>
</feature>
<comment type="function">
    <text evidence="1">Potential NADPH-dependent oxidoreductase. May be involved in the regulation of neuronal survival, differentiation and axonal outgrowth (By similarity).</text>
</comment>
<comment type="subunit">
    <text evidence="2">Interacts with NELFB, NOL12 and PRNP.</text>
</comment>
<comment type="subcellular location">
    <subcellularLocation>
        <location evidence="4">Cytoplasm</location>
    </subcellularLocation>
</comment>
<comment type="alternative products">
    <event type="alternative splicing"/>
    <isoform>
        <id>Q9DBN4-1</id>
        <name>1</name>
        <sequence type="displayed"/>
    </isoform>
    <isoform>
        <id>Q9DBN4-2</id>
        <name>2</name>
        <sequence type="described" ref="VSP_028802 VSP_028803"/>
    </isoform>
    <isoform>
        <id>Q9DBN4-3</id>
        <name>3</name>
        <sequence type="described" ref="VSP_028804 VSP_028805"/>
    </isoform>
</comment>
<comment type="tissue specificity">
    <text evidence="4">Expressed in neuronal pyramidal cells of the hippocampus and in the neurons of the cortex.</text>
</comment>
<comment type="similarity">
    <text evidence="6">Belongs to the P33MONOX family.</text>
</comment>
<comment type="sequence caution" evidence="6">
    <conflict type="erroneous initiation">
        <sequence resource="EMBL-CDS" id="BAD32404"/>
    </conflict>
    <text>Extended N-terminus.</text>
</comment>
<comment type="sequence caution" evidence="6">
    <molecule>Isoform 2</molecule>
    <conflict type="frameshift">
        <sequence resource="EMBL-CDS" id="BAC25449"/>
    </conflict>
</comment>